<evidence type="ECO:0000250" key="1"/>
<evidence type="ECO:0000250" key="2">
    <source>
        <dbReference type="UniProtKB" id="P07237"/>
    </source>
</evidence>
<evidence type="ECO:0000250" key="3">
    <source>
        <dbReference type="UniProtKB" id="P09103"/>
    </source>
</evidence>
<evidence type="ECO:0000255" key="4">
    <source>
        <dbReference type="PROSITE-ProRule" id="PRU00691"/>
    </source>
</evidence>
<evidence type="ECO:0000256" key="5">
    <source>
        <dbReference type="SAM" id="MobiDB-lite"/>
    </source>
</evidence>
<evidence type="ECO:0000305" key="6"/>
<organism>
    <name type="scientific">Oryctolagus cuniculus</name>
    <name type="common">Rabbit</name>
    <dbReference type="NCBI Taxonomy" id="9986"/>
    <lineage>
        <taxon>Eukaryota</taxon>
        <taxon>Metazoa</taxon>
        <taxon>Chordata</taxon>
        <taxon>Craniata</taxon>
        <taxon>Vertebrata</taxon>
        <taxon>Euteleostomi</taxon>
        <taxon>Mammalia</taxon>
        <taxon>Eutheria</taxon>
        <taxon>Euarchontoglires</taxon>
        <taxon>Glires</taxon>
        <taxon>Lagomorpha</taxon>
        <taxon>Leporidae</taxon>
        <taxon>Oryctolagus</taxon>
    </lineage>
</organism>
<sequence length="509" mass="56808">MLRRAVLCLALAVTAGWAWAAEEEDNVLVLKSSNFAEELAAHKHLLVEFYAPWCGHCKALAPEYAKAAGKLKAEGSDIRLAKVDATEESDLAQQYGVRGYPTIKFFKNGDTASPKEYTAGREADDIVNWLKKRTGPAATTLADSAAAESLVESSEVAVIGFFKDVESDAAKQFLLAAEATDDIPFGLTASSDVFSRYQVHQDGVVLFKKFDEGRNNFEGEVTKEKLLDFIKHNQLPLVIEFTEQTAPKIFGGEIKTHILLFLPRSAADHDGKLSGFKQAAEGFKGKILFIFIDSDHADNQRILEFFGLKKEECPAVRLITLEEEMTKYKPESDELTAEGITEFCQRFLEGKIKPHLMSQELPEDWDRQPVKVLVGKNFEEVAFDEKKNVFVEFYAPWCGHCKQLAPIWDKLGETYKEHQDIVIAKMDSTANEVEAVKVHSFPTLKFFPAGPGRTVIDYNGERTLDGFKKFLESGGQDGAGDEDGLEDLEEAEEPDLEEDDDQKAVRDEL</sequence>
<proteinExistence type="evidence at transcript level"/>
<dbReference type="EC" id="5.3.4.1" evidence="2"/>
<dbReference type="EMBL" id="J05602">
    <property type="protein sequence ID" value="AAA31476.1"/>
    <property type="molecule type" value="mRNA"/>
</dbReference>
<dbReference type="PIR" id="A38362">
    <property type="entry name" value="A38362"/>
</dbReference>
<dbReference type="RefSeq" id="NP_001164518.1">
    <property type="nucleotide sequence ID" value="NM_001171047.1"/>
</dbReference>
<dbReference type="SMR" id="P21195"/>
<dbReference type="BioGRID" id="1173214">
    <property type="interactions" value="2"/>
</dbReference>
<dbReference type="FunCoup" id="P21195">
    <property type="interactions" value="1299"/>
</dbReference>
<dbReference type="GeneID" id="100328595"/>
<dbReference type="KEGG" id="ocu:100328595"/>
<dbReference type="CTD" id="5034"/>
<dbReference type="InParanoid" id="P21195"/>
<dbReference type="OrthoDB" id="72053at2759"/>
<dbReference type="Proteomes" id="UP000001811">
    <property type="component" value="Unplaced"/>
</dbReference>
<dbReference type="GO" id="GO:0005783">
    <property type="term" value="C:endoplasmic reticulum"/>
    <property type="evidence" value="ECO:0000250"/>
    <property type="project" value="UniProtKB"/>
</dbReference>
<dbReference type="GO" id="GO:0005788">
    <property type="term" value="C:endoplasmic reticulum lumen"/>
    <property type="evidence" value="ECO:0007669"/>
    <property type="project" value="UniProtKB-SubCell"/>
</dbReference>
<dbReference type="GO" id="GO:0009897">
    <property type="term" value="C:external side of plasma membrane"/>
    <property type="evidence" value="ECO:0007669"/>
    <property type="project" value="TreeGrafter"/>
</dbReference>
<dbReference type="GO" id="GO:0042470">
    <property type="term" value="C:melanosome"/>
    <property type="evidence" value="ECO:0007669"/>
    <property type="project" value="UniProtKB-SubCell"/>
</dbReference>
<dbReference type="GO" id="GO:0003756">
    <property type="term" value="F:protein disulfide isomerase activity"/>
    <property type="evidence" value="ECO:0007669"/>
    <property type="project" value="UniProtKB-EC"/>
</dbReference>
<dbReference type="GO" id="GO:0046982">
    <property type="term" value="F:protein heterodimerization activity"/>
    <property type="evidence" value="ECO:0000250"/>
    <property type="project" value="UniProtKB"/>
</dbReference>
<dbReference type="GO" id="GO:0006457">
    <property type="term" value="P:protein folding"/>
    <property type="evidence" value="ECO:0007669"/>
    <property type="project" value="TreeGrafter"/>
</dbReference>
<dbReference type="GO" id="GO:0034976">
    <property type="term" value="P:response to endoplasmic reticulum stress"/>
    <property type="evidence" value="ECO:0007669"/>
    <property type="project" value="TreeGrafter"/>
</dbReference>
<dbReference type="CDD" id="cd02961">
    <property type="entry name" value="PDI_a_family"/>
    <property type="match status" value="1"/>
</dbReference>
<dbReference type="CDD" id="cd02995">
    <property type="entry name" value="PDI_a_PDI_a'_C"/>
    <property type="match status" value="1"/>
</dbReference>
<dbReference type="CDD" id="cd02982">
    <property type="entry name" value="PDI_b'_family"/>
    <property type="match status" value="1"/>
</dbReference>
<dbReference type="CDD" id="cd02981">
    <property type="entry name" value="PDI_b_family"/>
    <property type="match status" value="1"/>
</dbReference>
<dbReference type="FunFam" id="3.40.30.10:FF:000023">
    <property type="entry name" value="Protein disulfide-isomerase"/>
    <property type="match status" value="1"/>
</dbReference>
<dbReference type="FunFam" id="3.40.30.10:FF:000030">
    <property type="entry name" value="Protein disulfide-isomerase"/>
    <property type="match status" value="1"/>
</dbReference>
<dbReference type="FunFam" id="3.40.30.10:FF:000110">
    <property type="entry name" value="Protein disulfide-isomerase"/>
    <property type="match status" value="1"/>
</dbReference>
<dbReference type="FunFam" id="3.40.30.10:FF:000027">
    <property type="entry name" value="protein disulfide-isomerase A2"/>
    <property type="match status" value="1"/>
</dbReference>
<dbReference type="Gene3D" id="3.40.30.10">
    <property type="entry name" value="Glutaredoxin"/>
    <property type="match status" value="4"/>
</dbReference>
<dbReference type="InterPro" id="IPR005788">
    <property type="entry name" value="PDI_thioredoxin-like_dom"/>
</dbReference>
<dbReference type="InterPro" id="IPR005792">
    <property type="entry name" value="Prot_disulphide_isomerase"/>
</dbReference>
<dbReference type="InterPro" id="IPR036249">
    <property type="entry name" value="Thioredoxin-like_sf"/>
</dbReference>
<dbReference type="InterPro" id="IPR017937">
    <property type="entry name" value="Thioredoxin_CS"/>
</dbReference>
<dbReference type="InterPro" id="IPR013766">
    <property type="entry name" value="Thioredoxin_domain"/>
</dbReference>
<dbReference type="NCBIfam" id="TIGR01130">
    <property type="entry name" value="ER_PDI_fam"/>
    <property type="match status" value="1"/>
</dbReference>
<dbReference type="NCBIfam" id="TIGR01126">
    <property type="entry name" value="pdi_dom"/>
    <property type="match status" value="2"/>
</dbReference>
<dbReference type="PANTHER" id="PTHR18929">
    <property type="entry name" value="PROTEIN DISULFIDE ISOMERASE"/>
    <property type="match status" value="1"/>
</dbReference>
<dbReference type="PANTHER" id="PTHR18929:SF101">
    <property type="entry name" value="PROTEIN DISULFIDE-ISOMERASE"/>
    <property type="match status" value="1"/>
</dbReference>
<dbReference type="Pfam" id="PF00085">
    <property type="entry name" value="Thioredoxin"/>
    <property type="match status" value="2"/>
</dbReference>
<dbReference type="Pfam" id="PF13848">
    <property type="entry name" value="Thioredoxin_6"/>
    <property type="match status" value="1"/>
</dbReference>
<dbReference type="PRINTS" id="PR00421">
    <property type="entry name" value="THIOREDOXIN"/>
</dbReference>
<dbReference type="SUPFAM" id="SSF52833">
    <property type="entry name" value="Thioredoxin-like"/>
    <property type="match status" value="4"/>
</dbReference>
<dbReference type="PROSITE" id="PS00014">
    <property type="entry name" value="ER_TARGET"/>
    <property type="match status" value="1"/>
</dbReference>
<dbReference type="PROSITE" id="PS00194">
    <property type="entry name" value="THIOREDOXIN_1"/>
    <property type="match status" value="2"/>
</dbReference>
<dbReference type="PROSITE" id="PS51352">
    <property type="entry name" value="THIOREDOXIN_2"/>
    <property type="match status" value="2"/>
</dbReference>
<feature type="signal peptide" evidence="1">
    <location>
        <begin position="1"/>
        <end position="18"/>
    </location>
</feature>
<feature type="chain" id="PRO_0000034198" description="Protein disulfide-isomerase">
    <location>
        <begin position="19"/>
        <end position="509"/>
    </location>
</feature>
<feature type="domain" description="Thioredoxin 1" evidence="4">
    <location>
        <begin position="19"/>
        <end position="135"/>
    </location>
</feature>
<feature type="domain" description="Thioredoxin 2" evidence="4">
    <location>
        <begin position="347"/>
        <end position="476"/>
    </location>
</feature>
<feature type="region of interest" description="Disordered" evidence="5">
    <location>
        <begin position="471"/>
        <end position="509"/>
    </location>
</feature>
<feature type="short sequence motif" description="Prevents secretion from ER">
    <location>
        <begin position="506"/>
        <end position="509"/>
    </location>
</feature>
<feature type="compositionally biased region" description="Acidic residues" evidence="5">
    <location>
        <begin position="479"/>
        <end position="501"/>
    </location>
</feature>
<feature type="active site" description="Nucleophile" evidence="1">
    <location>
        <position position="54"/>
    </location>
</feature>
<feature type="active site" description="Nucleophile" evidence="1">
    <location>
        <position position="57"/>
    </location>
</feature>
<feature type="active site" description="Nucleophile" evidence="1">
    <location>
        <position position="398"/>
    </location>
</feature>
<feature type="active site" description="Nucleophile" evidence="1">
    <location>
        <position position="401"/>
    </location>
</feature>
<feature type="site" description="Contributes to redox potential value" evidence="1">
    <location>
        <position position="55"/>
    </location>
</feature>
<feature type="site" description="Contributes to redox potential value" evidence="1">
    <location>
        <position position="56"/>
    </location>
</feature>
<feature type="site" description="Lowers pKa of C-terminal Cys of first active site" evidence="1">
    <location>
        <position position="121"/>
    </location>
</feature>
<feature type="site" description="Contributes to redox potential value" evidence="1">
    <location>
        <position position="399"/>
    </location>
</feature>
<feature type="site" description="Contributes to redox potential value" evidence="1">
    <location>
        <position position="400"/>
    </location>
</feature>
<feature type="site" description="Lowers pKa of C-terminal Cys of second active site" evidence="1">
    <location>
        <position position="462"/>
    </location>
</feature>
<feature type="modified residue" description="N6-succinyllysine" evidence="3">
    <location>
        <position position="223"/>
    </location>
</feature>
<feature type="modified residue" description="N6-succinyllysine" evidence="3">
    <location>
        <position position="272"/>
    </location>
</feature>
<feature type="modified residue" description="Phosphoserine" evidence="2">
    <location>
        <position position="332"/>
    </location>
</feature>
<feature type="modified residue" description="Phosphoserine" evidence="2">
    <location>
        <position position="358"/>
    </location>
</feature>
<feature type="modified residue" description="Phosphoserine" evidence="2">
    <location>
        <position position="428"/>
    </location>
</feature>
<feature type="disulfide bond" description="Redox-active" evidence="4">
    <location>
        <begin position="54"/>
        <end position="57"/>
    </location>
</feature>
<feature type="disulfide bond" description="Redox-active" evidence="4">
    <location>
        <begin position="398"/>
        <end position="401"/>
    </location>
</feature>
<keyword id="KW-1003">Cell membrane</keyword>
<keyword id="KW-0143">Chaperone</keyword>
<keyword id="KW-1015">Disulfide bond</keyword>
<keyword id="KW-0256">Endoplasmic reticulum</keyword>
<keyword id="KW-0413">Isomerase</keyword>
<keyword id="KW-0472">Membrane</keyword>
<keyword id="KW-0597">Phosphoprotein</keyword>
<keyword id="KW-0676">Redox-active center</keyword>
<keyword id="KW-1185">Reference proteome</keyword>
<keyword id="KW-0677">Repeat</keyword>
<keyword id="KW-0732">Signal</keyword>
<accession>P21195</accession>
<name>PDIA1_RABIT</name>
<comment type="function">
    <text evidence="2">This multifunctional protein catalyzes the formation, breakage and rearrangement of disulfide bonds. At the cell surface, seems to act as a reductase that cleaves disulfide bonds of proteins attached to the cell. May therefore cause structural modifications of exofacial proteins. Inside the cell, seems to form/rearrange disulfide bonds of nascent proteins. At high concentrations and following phosphorylation by FAM20C, functions as a chaperone that inhibits aggregation of misfolded proteins. At low concentrations, facilitates aggregation (anti-chaperone activity). May be involved with other chaperones in the structural modification of the TG precursor in hormone biogenesis. Also acts as a structural subunit of various enzymes such as prolyl 4-hydroxylase and microsomal triacylglycerol transfer protein MTTP. Receptor for LGALS9; the interaction retains P4HB at the cell surface of Th2 T helper cells, increasing disulfide reductase activity at the plasma membrane, altering the plasma membrane redox state and enhancing cell migration.</text>
</comment>
<comment type="catalytic activity">
    <reaction evidence="2">
        <text>Catalyzes the rearrangement of -S-S- bonds in proteins.</text>
        <dbReference type="EC" id="5.3.4.1"/>
    </reaction>
</comment>
<comment type="subunit">
    <text evidence="1 2 3">Heterodimer; heterodimerizes with the protein microsomal triglyceride transfer MTTP. Homodimer. Monomers and homotetramers may also occur. Interacts with P4HA2, forming a heterotetramer consisting of 2 alpha subunits (P4HA2) and 2 beta (P4HB), where P4HB plays the role of a structural subunit; this tetramer catalyzes the formation of 4-hydroxyproline in collagen (By similarity). Also constitutes the structural subunit of the microsomal triacylglycerol transfer protein MTTP in mammalian cells. Stabilizes both enzymes and retain them in the ER without contributing to the catalytic activity. Binds UBQLN1. Interacts with ERO1B. Interacts with ILDR2 (By similarity). Interacts with ERN1/IRE1A (via N-terminus); the interaction is enhanced by phosphorylation of P4HB by FAM20C in response to endoplasmic reticulum stress and results in attenuation of ERN1 activity (By similarity).</text>
</comment>
<comment type="subcellular location">
    <subcellularLocation>
        <location evidence="2">Endoplasmic reticulum</location>
    </subcellularLocation>
    <subcellularLocation>
        <location evidence="2">Endoplasmic reticulum lumen</location>
    </subcellularLocation>
    <subcellularLocation>
        <location evidence="2">Melanosome</location>
    </subcellularLocation>
    <subcellularLocation>
        <location evidence="3">Cell membrane</location>
        <topology evidence="6">Peripheral membrane protein</topology>
    </subcellularLocation>
    <text evidence="2">Highly abundant. In some cell types, seems to be also secreted or associated with the plasma membrane, where it undergoes constant shedding and replacement from intracellular sources. Localizes near CD4-enriched regions on lymphoid cell surfaces. Colocalizes with MTTP in the endoplasmic reticulum.</text>
</comment>
<comment type="PTM">
    <text evidence="2">Phosphorylation of Ser-358 by FAM20C is induced by endoplasmic reticulum stress and results in a functional switch from oxidoreductase to molecular chaperone. It also promotes interaction with ERN1.</text>
</comment>
<comment type="similarity">
    <text evidence="6">Belongs to the protein disulfide isomerase family.</text>
</comment>
<gene>
    <name type="primary">P4HB</name>
    <name type="synonym">PDIA1</name>
</gene>
<reference key="1">
    <citation type="journal article" date="1990" name="J. Biol. Chem.">
        <title>Molecular cloning of cDNA encoding a 55-kDa multifunctional thyroid hormone binding protein of skeletal muscle sarcoplasmic reticulum.</title>
        <authorList>
            <person name="Fliegel L."/>
            <person name="Newton E."/>
            <person name="Burns K."/>
            <person name="Michalak M."/>
        </authorList>
    </citation>
    <scope>NUCLEOTIDE SEQUENCE [MRNA]</scope>
</reference>
<protein>
    <recommendedName>
        <fullName>Protein disulfide-isomerase</fullName>
        <shortName>PDI</shortName>
        <ecNumber evidence="2">5.3.4.1</ecNumber>
    </recommendedName>
    <alternativeName>
        <fullName>Cellular thyroid hormone-binding protein</fullName>
    </alternativeName>
    <alternativeName>
        <fullName>Prolyl 4-hydroxylase subunit beta</fullName>
    </alternativeName>
    <alternativeName>
        <fullName>p55</fullName>
    </alternativeName>
</protein>